<sequence>MAEVANNEQQAPQFNIQRVYTKDVSFETPNSPAVFQKEWNPEVKLDLDTRSAKLADDVYEVVLSLTVTAQNGGETAFLCEVQQAGIFSISGLTEPQLAHSLGAYCPNILFPYAREAVGSLVGRGTFPQLNLAPVNFDALFAQYVQQRQAAATAPAAEEANA</sequence>
<evidence type="ECO:0000255" key="1">
    <source>
        <dbReference type="HAMAP-Rule" id="MF_00821"/>
    </source>
</evidence>
<name>SECB_SHEPC</name>
<reference key="1">
    <citation type="submission" date="2007-04" db="EMBL/GenBank/DDBJ databases">
        <title>Complete sequence of Shewanella putrefaciens CN-32.</title>
        <authorList>
            <consortium name="US DOE Joint Genome Institute"/>
            <person name="Copeland A."/>
            <person name="Lucas S."/>
            <person name="Lapidus A."/>
            <person name="Barry K."/>
            <person name="Detter J.C."/>
            <person name="Glavina del Rio T."/>
            <person name="Hammon N."/>
            <person name="Israni S."/>
            <person name="Dalin E."/>
            <person name="Tice H."/>
            <person name="Pitluck S."/>
            <person name="Chain P."/>
            <person name="Malfatti S."/>
            <person name="Shin M."/>
            <person name="Vergez L."/>
            <person name="Schmutz J."/>
            <person name="Larimer F."/>
            <person name="Land M."/>
            <person name="Hauser L."/>
            <person name="Kyrpides N."/>
            <person name="Mikhailova N."/>
            <person name="Romine M.F."/>
            <person name="Fredrickson J."/>
            <person name="Tiedje J."/>
            <person name="Richardson P."/>
        </authorList>
    </citation>
    <scope>NUCLEOTIDE SEQUENCE [LARGE SCALE GENOMIC DNA]</scope>
    <source>
        <strain>CN-32 / ATCC BAA-453</strain>
    </source>
</reference>
<keyword id="KW-0143">Chaperone</keyword>
<keyword id="KW-0963">Cytoplasm</keyword>
<keyword id="KW-0653">Protein transport</keyword>
<keyword id="KW-0811">Translocation</keyword>
<keyword id="KW-0813">Transport</keyword>
<protein>
    <recommendedName>
        <fullName evidence="1">Protein-export protein SecB</fullName>
    </recommendedName>
</protein>
<gene>
    <name evidence="1" type="primary">secB</name>
    <name type="ordered locus">Sputcn32_0042</name>
</gene>
<proteinExistence type="inferred from homology"/>
<feature type="chain" id="PRO_1000062522" description="Protein-export protein SecB">
    <location>
        <begin position="1"/>
        <end position="161"/>
    </location>
</feature>
<dbReference type="EMBL" id="CP000681">
    <property type="protein sequence ID" value="ABP73778.1"/>
    <property type="molecule type" value="Genomic_DNA"/>
</dbReference>
<dbReference type="SMR" id="A4Y1E5"/>
<dbReference type="STRING" id="319224.Sputcn32_0042"/>
<dbReference type="KEGG" id="spc:Sputcn32_0042"/>
<dbReference type="eggNOG" id="COG1952">
    <property type="taxonomic scope" value="Bacteria"/>
</dbReference>
<dbReference type="HOGENOM" id="CLU_111574_1_0_6"/>
<dbReference type="GO" id="GO:0005737">
    <property type="term" value="C:cytoplasm"/>
    <property type="evidence" value="ECO:0007669"/>
    <property type="project" value="UniProtKB-SubCell"/>
</dbReference>
<dbReference type="GO" id="GO:0051082">
    <property type="term" value="F:unfolded protein binding"/>
    <property type="evidence" value="ECO:0007669"/>
    <property type="project" value="InterPro"/>
</dbReference>
<dbReference type="GO" id="GO:0006457">
    <property type="term" value="P:protein folding"/>
    <property type="evidence" value="ECO:0007669"/>
    <property type="project" value="UniProtKB-UniRule"/>
</dbReference>
<dbReference type="GO" id="GO:0051262">
    <property type="term" value="P:protein tetramerization"/>
    <property type="evidence" value="ECO:0007669"/>
    <property type="project" value="InterPro"/>
</dbReference>
<dbReference type="GO" id="GO:0015031">
    <property type="term" value="P:protein transport"/>
    <property type="evidence" value="ECO:0007669"/>
    <property type="project" value="UniProtKB-UniRule"/>
</dbReference>
<dbReference type="Gene3D" id="3.10.420.10">
    <property type="entry name" value="SecB-like"/>
    <property type="match status" value="1"/>
</dbReference>
<dbReference type="HAMAP" id="MF_00821">
    <property type="entry name" value="SecB"/>
    <property type="match status" value="1"/>
</dbReference>
<dbReference type="InterPro" id="IPR003708">
    <property type="entry name" value="SecB"/>
</dbReference>
<dbReference type="InterPro" id="IPR035958">
    <property type="entry name" value="SecB-like_sf"/>
</dbReference>
<dbReference type="NCBIfam" id="NF004393">
    <property type="entry name" value="PRK05751.1-4"/>
    <property type="match status" value="1"/>
</dbReference>
<dbReference type="NCBIfam" id="TIGR00809">
    <property type="entry name" value="secB"/>
    <property type="match status" value="1"/>
</dbReference>
<dbReference type="PANTHER" id="PTHR36918">
    <property type="match status" value="1"/>
</dbReference>
<dbReference type="PANTHER" id="PTHR36918:SF1">
    <property type="entry name" value="PROTEIN-EXPORT PROTEIN SECB"/>
    <property type="match status" value="1"/>
</dbReference>
<dbReference type="Pfam" id="PF02556">
    <property type="entry name" value="SecB"/>
    <property type="match status" value="1"/>
</dbReference>
<dbReference type="PRINTS" id="PR01594">
    <property type="entry name" value="SECBCHAPRONE"/>
</dbReference>
<dbReference type="SUPFAM" id="SSF54611">
    <property type="entry name" value="SecB-like"/>
    <property type="match status" value="1"/>
</dbReference>
<accession>A4Y1E5</accession>
<organism>
    <name type="scientific">Shewanella putrefaciens (strain CN-32 / ATCC BAA-453)</name>
    <dbReference type="NCBI Taxonomy" id="319224"/>
    <lineage>
        <taxon>Bacteria</taxon>
        <taxon>Pseudomonadati</taxon>
        <taxon>Pseudomonadota</taxon>
        <taxon>Gammaproteobacteria</taxon>
        <taxon>Alteromonadales</taxon>
        <taxon>Shewanellaceae</taxon>
        <taxon>Shewanella</taxon>
    </lineage>
</organism>
<comment type="function">
    <text evidence="1">One of the proteins required for the normal export of preproteins out of the cell cytoplasm. It is a molecular chaperone that binds to a subset of precursor proteins, maintaining them in a translocation-competent state. It also specifically binds to its receptor SecA.</text>
</comment>
<comment type="subunit">
    <text evidence="1">Homotetramer, a dimer of dimers. One homotetramer interacts with 1 SecA dimer.</text>
</comment>
<comment type="subcellular location">
    <subcellularLocation>
        <location evidence="1">Cytoplasm</location>
    </subcellularLocation>
</comment>
<comment type="similarity">
    <text evidence="1">Belongs to the SecB family.</text>
</comment>